<keyword id="KW-0013">ADP-ribosylation</keyword>
<keyword id="KW-0175">Coiled coil</keyword>
<keyword id="KW-0931">ER-Golgi transport</keyword>
<keyword id="KW-0333">Golgi apparatus</keyword>
<keyword id="KW-0472">Membrane</keyword>
<keyword id="KW-0597">Phosphoprotein</keyword>
<keyword id="KW-0653">Protein transport</keyword>
<keyword id="KW-1185">Reference proteome</keyword>
<keyword id="KW-0813">Transport</keyword>
<keyword id="KW-0832">Ubl conjugation</keyword>
<accession>Q6AYB8</accession>
<comment type="function">
    <text evidence="1">Required for normal Golgi structure and for protein transport from the endoplasmic reticulum (ER) through the Golgi apparatus to the cell surface.</text>
</comment>
<comment type="subunit">
    <text evidence="4">Interacts with GORASP2 (PubMed:11739401). Interacts with the GTP-bound form of RAB2, but not with other Golgi Rab proteins (PubMed:11739401). Identified in a complex with RAB2 and GORASP2 (PubMed:11739401).</text>
</comment>
<comment type="interaction">
    <interactant intactId="EBI-4422894">
        <id>Q6AYB8</id>
    </interactant>
    <interactant intactId="EBI-4422912">
        <id>Q9R064</id>
        <label>Gorasp2</label>
    </interactant>
    <organismsDiffer>false</organismsDiffer>
    <experiments>5</experiments>
</comment>
<comment type="subcellular location">
    <subcellularLocation>
        <location evidence="4">Golgi apparatus membrane</location>
    </subcellularLocation>
</comment>
<comment type="domain">
    <text evidence="1">The tankyrase-binding motif (also named TBD) is required for interaction with tankyrase TNKS and TNKS2.</text>
</comment>
<comment type="PTM">
    <text evidence="1">ADP-ribosylated by tankyrase TNKS and TNKS2. Poly-ADP-ribosylated protein is recognized by RNF146, followed by ubiquitination.</text>
</comment>
<comment type="PTM">
    <text evidence="1">Ubiquitinated by RNF146 when poly-ADP-ribosylated, leading to its degradation.</text>
</comment>
<comment type="caution">
    <text evidence="5">Was initially thought to be a potential transcription factor, localized in the nucleus.</text>
</comment>
<reference key="1">
    <citation type="journal article" date="2004" name="Nature">
        <title>Genome sequence of the Brown Norway rat yields insights into mammalian evolution.</title>
        <authorList>
            <person name="Gibbs R.A."/>
            <person name="Weinstock G.M."/>
            <person name="Metzker M.L."/>
            <person name="Muzny D.M."/>
            <person name="Sodergren E.J."/>
            <person name="Scherer S."/>
            <person name="Scott G."/>
            <person name="Steffen D."/>
            <person name="Worley K.C."/>
            <person name="Burch P.E."/>
            <person name="Okwuonu G."/>
            <person name="Hines S."/>
            <person name="Lewis L."/>
            <person name="Deramo C."/>
            <person name="Delgado O."/>
            <person name="Dugan-Rocha S."/>
            <person name="Miner G."/>
            <person name="Morgan M."/>
            <person name="Hawes A."/>
            <person name="Gill R."/>
            <person name="Holt R.A."/>
            <person name="Adams M.D."/>
            <person name="Amanatides P.G."/>
            <person name="Baden-Tillson H."/>
            <person name="Barnstead M."/>
            <person name="Chin S."/>
            <person name="Evans C.A."/>
            <person name="Ferriera S."/>
            <person name="Fosler C."/>
            <person name="Glodek A."/>
            <person name="Gu Z."/>
            <person name="Jennings D."/>
            <person name="Kraft C.L."/>
            <person name="Nguyen T."/>
            <person name="Pfannkoch C.M."/>
            <person name="Sitter C."/>
            <person name="Sutton G.G."/>
            <person name="Venter J.C."/>
            <person name="Woodage T."/>
            <person name="Smith D."/>
            <person name="Lee H.-M."/>
            <person name="Gustafson E."/>
            <person name="Cahill P."/>
            <person name="Kana A."/>
            <person name="Doucette-Stamm L."/>
            <person name="Weinstock K."/>
            <person name="Fechtel K."/>
            <person name="Weiss R.B."/>
            <person name="Dunn D.M."/>
            <person name="Green E.D."/>
            <person name="Blakesley R.W."/>
            <person name="Bouffard G.G."/>
            <person name="De Jong P.J."/>
            <person name="Osoegawa K."/>
            <person name="Zhu B."/>
            <person name="Marra M."/>
            <person name="Schein J."/>
            <person name="Bosdet I."/>
            <person name="Fjell C."/>
            <person name="Jones S."/>
            <person name="Krzywinski M."/>
            <person name="Mathewson C."/>
            <person name="Siddiqui A."/>
            <person name="Wye N."/>
            <person name="McPherson J."/>
            <person name="Zhao S."/>
            <person name="Fraser C.M."/>
            <person name="Shetty J."/>
            <person name="Shatsman S."/>
            <person name="Geer K."/>
            <person name="Chen Y."/>
            <person name="Abramzon S."/>
            <person name="Nierman W.C."/>
            <person name="Havlak P.H."/>
            <person name="Chen R."/>
            <person name="Durbin K.J."/>
            <person name="Egan A."/>
            <person name="Ren Y."/>
            <person name="Song X.-Z."/>
            <person name="Li B."/>
            <person name="Liu Y."/>
            <person name="Qin X."/>
            <person name="Cawley S."/>
            <person name="Cooney A.J."/>
            <person name="D'Souza L.M."/>
            <person name="Martin K."/>
            <person name="Wu J.Q."/>
            <person name="Gonzalez-Garay M.L."/>
            <person name="Jackson A.R."/>
            <person name="Kalafus K.J."/>
            <person name="McLeod M.P."/>
            <person name="Milosavljevic A."/>
            <person name="Virk D."/>
            <person name="Volkov A."/>
            <person name="Wheeler D.A."/>
            <person name="Zhang Z."/>
            <person name="Bailey J.A."/>
            <person name="Eichler E.E."/>
            <person name="Tuzun E."/>
            <person name="Birney E."/>
            <person name="Mongin E."/>
            <person name="Ureta-Vidal A."/>
            <person name="Woodwark C."/>
            <person name="Zdobnov E."/>
            <person name="Bork P."/>
            <person name="Suyama M."/>
            <person name="Torrents D."/>
            <person name="Alexandersson M."/>
            <person name="Trask B.J."/>
            <person name="Young J.M."/>
            <person name="Huang H."/>
            <person name="Wang H."/>
            <person name="Xing H."/>
            <person name="Daniels S."/>
            <person name="Gietzen D."/>
            <person name="Schmidt J."/>
            <person name="Stevens K."/>
            <person name="Vitt U."/>
            <person name="Wingrove J."/>
            <person name="Camara F."/>
            <person name="Mar Alba M."/>
            <person name="Abril J.F."/>
            <person name="Guigo R."/>
            <person name="Smit A."/>
            <person name="Dubchak I."/>
            <person name="Rubin E.M."/>
            <person name="Couronne O."/>
            <person name="Poliakov A."/>
            <person name="Huebner N."/>
            <person name="Ganten D."/>
            <person name="Goesele C."/>
            <person name="Hummel O."/>
            <person name="Kreitler T."/>
            <person name="Lee Y.-A."/>
            <person name="Monti J."/>
            <person name="Schulz H."/>
            <person name="Zimdahl H."/>
            <person name="Himmelbauer H."/>
            <person name="Lehrach H."/>
            <person name="Jacob H.J."/>
            <person name="Bromberg S."/>
            <person name="Gullings-Handley J."/>
            <person name="Jensen-Seaman M.I."/>
            <person name="Kwitek A.E."/>
            <person name="Lazar J."/>
            <person name="Pasko D."/>
            <person name="Tonellato P.J."/>
            <person name="Twigger S."/>
            <person name="Ponting C.P."/>
            <person name="Duarte J.M."/>
            <person name="Rice S."/>
            <person name="Goodstadt L."/>
            <person name="Beatson S.A."/>
            <person name="Emes R.D."/>
            <person name="Winter E.E."/>
            <person name="Webber C."/>
            <person name="Brandt P."/>
            <person name="Nyakatura G."/>
            <person name="Adetobi M."/>
            <person name="Chiaromonte F."/>
            <person name="Elnitski L."/>
            <person name="Eswara P."/>
            <person name="Hardison R.C."/>
            <person name="Hou M."/>
            <person name="Kolbe D."/>
            <person name="Makova K."/>
            <person name="Miller W."/>
            <person name="Nekrutenko A."/>
            <person name="Riemer C."/>
            <person name="Schwartz S."/>
            <person name="Taylor J."/>
            <person name="Yang S."/>
            <person name="Zhang Y."/>
            <person name="Lindpaintner K."/>
            <person name="Andrews T.D."/>
            <person name="Caccamo M."/>
            <person name="Clamp M."/>
            <person name="Clarke L."/>
            <person name="Curwen V."/>
            <person name="Durbin R.M."/>
            <person name="Eyras E."/>
            <person name="Searle S.M."/>
            <person name="Cooper G.M."/>
            <person name="Batzoglou S."/>
            <person name="Brudno M."/>
            <person name="Sidow A."/>
            <person name="Stone E.A."/>
            <person name="Payseur B.A."/>
            <person name="Bourque G."/>
            <person name="Lopez-Otin C."/>
            <person name="Puente X.S."/>
            <person name="Chakrabarti K."/>
            <person name="Chatterji S."/>
            <person name="Dewey C."/>
            <person name="Pachter L."/>
            <person name="Bray N."/>
            <person name="Yap V.B."/>
            <person name="Caspi A."/>
            <person name="Tesler G."/>
            <person name="Pevzner P.A."/>
            <person name="Haussler D."/>
            <person name="Roskin K.M."/>
            <person name="Baertsch R."/>
            <person name="Clawson H."/>
            <person name="Furey T.S."/>
            <person name="Hinrichs A.S."/>
            <person name="Karolchik D."/>
            <person name="Kent W.J."/>
            <person name="Rosenbloom K.R."/>
            <person name="Trumbower H."/>
            <person name="Weirauch M."/>
            <person name="Cooper D.N."/>
            <person name="Stenson P.D."/>
            <person name="Ma B."/>
            <person name="Brent M."/>
            <person name="Arumugam M."/>
            <person name="Shteynberg D."/>
            <person name="Copley R.R."/>
            <person name="Taylor M.S."/>
            <person name="Riethman H."/>
            <person name="Mudunuri U."/>
            <person name="Peterson J."/>
            <person name="Guyer M."/>
            <person name="Felsenfeld A."/>
            <person name="Old S."/>
            <person name="Mockrin S."/>
            <person name="Collins F.S."/>
        </authorList>
    </citation>
    <scope>NUCLEOTIDE SEQUENCE [LARGE SCALE GENOMIC DNA]</scope>
    <source>
        <strain>Brown Norway</strain>
    </source>
</reference>
<reference key="2">
    <citation type="submission" date="2005-09" db="EMBL/GenBank/DDBJ databases">
        <authorList>
            <person name="Mural R.J."/>
            <person name="Adams M.D."/>
            <person name="Myers E.W."/>
            <person name="Smith H.O."/>
            <person name="Venter J.C."/>
        </authorList>
    </citation>
    <scope>NUCLEOTIDE SEQUENCE [LARGE SCALE GENOMIC DNA]</scope>
</reference>
<reference key="3">
    <citation type="journal article" date="2004" name="Genome Res.">
        <title>The status, quality, and expansion of the NIH full-length cDNA project: the Mammalian Gene Collection (MGC).</title>
        <authorList>
            <consortium name="The MGC Project Team"/>
        </authorList>
    </citation>
    <scope>NUCLEOTIDE SEQUENCE [LARGE SCALE MRNA]</scope>
    <source>
        <tissue evidence="6">Kidney</tissue>
    </source>
</reference>
<reference key="4">
    <citation type="journal article" date="2001" name="J. Cell Biol.">
        <title>A GRASP55-rab2 effector complex linking Golgi structure to membrane traffic.</title>
        <authorList>
            <person name="Short B."/>
            <person name="Preisinger C."/>
            <person name="Koerner R."/>
            <person name="Kopajtich R."/>
            <person name="Byron O."/>
            <person name="Barr F.A."/>
        </authorList>
    </citation>
    <scope>INTERACTION WITH GORASP2 AND RAB2</scope>
    <scope>SUBCELLULAR LOCATION</scope>
    <scope>IDENTIFICATION BY MASS SPECTROMETRY</scope>
</reference>
<dbReference type="EMBL" id="AABR07021628">
    <property type="status" value="NOT_ANNOTATED_CDS"/>
    <property type="molecule type" value="Genomic_DNA"/>
</dbReference>
<dbReference type="EMBL" id="CH473958">
    <property type="protein sequence ID" value="EDM09357.1"/>
    <property type="molecule type" value="Genomic_DNA"/>
</dbReference>
<dbReference type="EMBL" id="BC079114">
    <property type="protein sequence ID" value="AAH79114.1"/>
    <property type="molecule type" value="mRNA"/>
</dbReference>
<dbReference type="RefSeq" id="NP_001017494.1">
    <property type="nucleotide sequence ID" value="NM_001017494.1"/>
</dbReference>
<dbReference type="SMR" id="Q6AYB8"/>
<dbReference type="CORUM" id="Q6AYB8"/>
<dbReference type="FunCoup" id="Q6AYB8">
    <property type="interactions" value="2830"/>
</dbReference>
<dbReference type="IntAct" id="Q6AYB8">
    <property type="interactions" value="2"/>
</dbReference>
<dbReference type="STRING" id="10116.ENSRNOP00000046014"/>
<dbReference type="PhosphoSitePlus" id="Q6AYB8"/>
<dbReference type="PaxDb" id="10116-ENSRNOP00000046014"/>
<dbReference type="Ensembl" id="ENSRNOT00000051763.5">
    <property type="protein sequence ID" value="ENSRNOP00000046014.2"/>
    <property type="gene ID" value="ENSRNOG00000002884.7"/>
</dbReference>
<dbReference type="GeneID" id="498266"/>
<dbReference type="KEGG" id="rno:498266"/>
<dbReference type="UCSC" id="RGD:1562452">
    <property type="organism name" value="rat"/>
</dbReference>
<dbReference type="AGR" id="RGD:1562452"/>
<dbReference type="CTD" id="8548"/>
<dbReference type="RGD" id="1562452">
    <property type="gene designation" value="Blzf1"/>
</dbReference>
<dbReference type="eggNOG" id="KOG4074">
    <property type="taxonomic scope" value="Eukaryota"/>
</dbReference>
<dbReference type="GeneTree" id="ENSGT00390000009400"/>
<dbReference type="HOGENOM" id="CLU_057527_0_0_1"/>
<dbReference type="InParanoid" id="Q6AYB8"/>
<dbReference type="OMA" id="MIDTHKL"/>
<dbReference type="OrthoDB" id="41856at9989"/>
<dbReference type="PhylomeDB" id="Q6AYB8"/>
<dbReference type="Reactome" id="R-RNO-162658">
    <property type="pathway name" value="Golgi Cisternae Pericentriolar Stack Reorganization"/>
</dbReference>
<dbReference type="PRO" id="PR:Q6AYB8"/>
<dbReference type="Proteomes" id="UP000002494">
    <property type="component" value="Chromosome 13"/>
</dbReference>
<dbReference type="Proteomes" id="UP000234681">
    <property type="component" value="Chromosome 13"/>
</dbReference>
<dbReference type="Bgee" id="ENSRNOG00000002884">
    <property type="expression patterns" value="Expressed in esophagus and 19 other cell types or tissues"/>
</dbReference>
<dbReference type="GO" id="GO:0005794">
    <property type="term" value="C:Golgi apparatus"/>
    <property type="evidence" value="ECO:0000266"/>
    <property type="project" value="RGD"/>
</dbReference>
<dbReference type="GO" id="GO:0000139">
    <property type="term" value="C:Golgi membrane"/>
    <property type="evidence" value="ECO:0000314"/>
    <property type="project" value="RGD"/>
</dbReference>
<dbReference type="GO" id="GO:0005634">
    <property type="term" value="C:nucleus"/>
    <property type="evidence" value="ECO:0000266"/>
    <property type="project" value="RGD"/>
</dbReference>
<dbReference type="GO" id="GO:0019899">
    <property type="term" value="F:enzyme binding"/>
    <property type="evidence" value="ECO:0000266"/>
    <property type="project" value="RGD"/>
</dbReference>
<dbReference type="GO" id="GO:0031625">
    <property type="term" value="F:ubiquitin protein ligase binding"/>
    <property type="evidence" value="ECO:0000266"/>
    <property type="project" value="RGD"/>
</dbReference>
<dbReference type="GO" id="GO:0007030">
    <property type="term" value="P:Golgi organization"/>
    <property type="evidence" value="ECO:0000266"/>
    <property type="project" value="RGD"/>
</dbReference>
<dbReference type="GO" id="GO:0043001">
    <property type="term" value="P:Golgi to plasma membrane protein transport"/>
    <property type="evidence" value="ECO:0000266"/>
    <property type="project" value="RGD"/>
</dbReference>
<dbReference type="InterPro" id="IPR027095">
    <property type="entry name" value="Golgin-45"/>
</dbReference>
<dbReference type="InterPro" id="IPR013183">
    <property type="entry name" value="Hsk3-like"/>
</dbReference>
<dbReference type="PANTHER" id="PTHR13066">
    <property type="entry name" value="BASIC LEUCINE ZIPPER NUCLEAR FACTOR 1 BLZF1 PROTEIN"/>
    <property type="match status" value="1"/>
</dbReference>
<dbReference type="PANTHER" id="PTHR13066:SF2">
    <property type="entry name" value="GOLGIN-45"/>
    <property type="match status" value="1"/>
</dbReference>
<dbReference type="Pfam" id="PF08227">
    <property type="entry name" value="DASH_Hsk3"/>
    <property type="match status" value="1"/>
</dbReference>
<name>GO45_RAT</name>
<organism evidence="6">
    <name type="scientific">Rattus norvegicus</name>
    <name type="common">Rat</name>
    <dbReference type="NCBI Taxonomy" id="10116"/>
    <lineage>
        <taxon>Eukaryota</taxon>
        <taxon>Metazoa</taxon>
        <taxon>Chordata</taxon>
        <taxon>Craniata</taxon>
        <taxon>Vertebrata</taxon>
        <taxon>Euteleostomi</taxon>
        <taxon>Mammalia</taxon>
        <taxon>Eutheria</taxon>
        <taxon>Euarchontoglires</taxon>
        <taxon>Glires</taxon>
        <taxon>Rodentia</taxon>
        <taxon>Myomorpha</taxon>
        <taxon>Muroidea</taxon>
        <taxon>Muridae</taxon>
        <taxon>Murinae</taxon>
        <taxon>Rattus</taxon>
    </lineage>
</organism>
<feature type="chain" id="PRO_0000445242" description="Golgin-45">
    <location>
        <begin position="1"/>
        <end position="400"/>
    </location>
</feature>
<feature type="region of interest" description="Disordered" evidence="3">
    <location>
        <begin position="1"/>
        <end position="36"/>
    </location>
</feature>
<feature type="region of interest" description="Essential for interaction with GORASP2" evidence="1">
    <location>
        <begin position="394"/>
        <end position="400"/>
    </location>
</feature>
<feature type="coiled-coil region" evidence="2">
    <location>
        <begin position="126"/>
        <end position="263"/>
    </location>
</feature>
<feature type="short sequence motif" description="Tankyrase-binding motif" evidence="1">
    <location>
        <begin position="22"/>
        <end position="26"/>
    </location>
</feature>
<feature type="modified residue" description="Phosphoserine" evidence="1">
    <location>
        <position position="53"/>
    </location>
</feature>
<feature type="modified residue" description="Phosphoserine" evidence="1">
    <location>
        <position position="356"/>
    </location>
</feature>
<protein>
    <recommendedName>
        <fullName>Golgin-45</fullName>
    </recommendedName>
    <alternativeName>
        <fullName>Basic leucine zipper nuclear factor 1</fullName>
    </alternativeName>
</protein>
<proteinExistence type="evidence at protein level"/>
<evidence type="ECO:0000250" key="1">
    <source>
        <dbReference type="UniProtKB" id="Q9H2G9"/>
    </source>
</evidence>
<evidence type="ECO:0000255" key="2"/>
<evidence type="ECO:0000256" key="3">
    <source>
        <dbReference type="SAM" id="MobiDB-lite"/>
    </source>
</evidence>
<evidence type="ECO:0000269" key="4">
    <source>
    </source>
</evidence>
<evidence type="ECO:0000305" key="5"/>
<evidence type="ECO:0000312" key="6">
    <source>
        <dbReference type="EMBL" id="AAH79114.1"/>
    </source>
</evidence>
<evidence type="ECO:0000312" key="7">
    <source>
        <dbReference type="RGD" id="1562452"/>
    </source>
</evidence>
<gene>
    <name evidence="7" type="primary">Blzf1</name>
</gene>
<sequence>MEKMTTLKSFESKGILTSTPIRGAGDGMETEEPPKSVEVTHGVQPINQHVLPSPRKKVPSDSPGVLQLGKILNEKTVEVEAVRIFVPKAAITHDIPTKSAKVKSLGHHREELHNQSEVVTDPRKELSEVKKVLEKLKNSERRLLQDKEGLSNQLRVQTEVNRELKKLLVASVGDDPQYHFERLAREKNQLILENEALGRNTAQLSEQLERMSIQCDVWRSKFLASRVMADELTNFRVVLQHQNRDAQSAIQDLLSEREQFRQEMISTQKFLEELLVSLQWGREQTYSPNTQPHSTADLALTNHRLAEAVHAHLLGNVGISHPKRTPATAEVCSTPAEKMAEKVLRILDPVACTESSPDNAFAESTLLTTKKNIGRFHPYTRYENITFNCCSHCQGELLAL</sequence>